<dbReference type="EMBL" id="AK001352">
    <property type="protein sequence ID" value="BAA91643.1"/>
    <property type="molecule type" value="mRNA"/>
</dbReference>
<dbReference type="EMBL" id="AC008687">
    <property type="status" value="NOT_ANNOTATED_CDS"/>
    <property type="molecule type" value="Genomic_DNA"/>
</dbReference>
<dbReference type="EMBL" id="CH471177">
    <property type="protein sequence ID" value="EAW52456.1"/>
    <property type="molecule type" value="Genomic_DNA"/>
</dbReference>
<dbReference type="EMBL" id="BC051004">
    <property type="protein sequence ID" value="AAH51004.1"/>
    <property type="molecule type" value="mRNA"/>
</dbReference>
<dbReference type="EMBL" id="BC069669">
    <property type="protein sequence ID" value="AAH69669.1"/>
    <property type="molecule type" value="mRNA"/>
</dbReference>
<dbReference type="EMBL" id="BC069693">
    <property type="protein sequence ID" value="AAH69693.1"/>
    <property type="molecule type" value="mRNA"/>
</dbReference>
<dbReference type="EMBL" id="BC069712">
    <property type="protein sequence ID" value="AAH69712.1"/>
    <property type="molecule type" value="mRNA"/>
</dbReference>
<dbReference type="EMBL" id="BC069750">
    <property type="protein sequence ID" value="AAH69750.1"/>
    <property type="molecule type" value="mRNA"/>
</dbReference>
<dbReference type="CCDS" id="CCDS42589.1"/>
<dbReference type="RefSeq" id="NP_060581.2">
    <property type="nucleotide sequence ID" value="NM_018111.3"/>
</dbReference>
<dbReference type="BioGRID" id="120453">
    <property type="interactions" value="3"/>
</dbReference>
<dbReference type="IntAct" id="Q9NVV2">
    <property type="interactions" value="4"/>
</dbReference>
<dbReference type="STRING" id="9606.ENSP00000386230"/>
<dbReference type="GlyGen" id="Q9NVV2">
    <property type="glycosylation" value="2 sites, 1 O-linked glycan (1 site)"/>
</dbReference>
<dbReference type="BioMuta" id="C19orf73"/>
<dbReference type="PaxDb" id="9606-ENSP00000386230"/>
<dbReference type="PeptideAtlas" id="Q9NVV2"/>
<dbReference type="Antibodypedia" id="56430">
    <property type="antibodies" value="18 antibodies from 9 providers"/>
</dbReference>
<dbReference type="DNASU" id="55150"/>
<dbReference type="Ensembl" id="ENST00000408991.4">
    <property type="protein sequence ID" value="ENSP00000386230.2"/>
    <property type="gene ID" value="ENSG00000221916.4"/>
</dbReference>
<dbReference type="GeneID" id="55150"/>
<dbReference type="KEGG" id="hsa:55150"/>
<dbReference type="MANE-Select" id="ENST00000408991.4">
    <property type="protein sequence ID" value="ENSP00000386230.2"/>
    <property type="RefSeq nucleotide sequence ID" value="NM_018111.3"/>
    <property type="RefSeq protein sequence ID" value="NP_060581.2"/>
</dbReference>
<dbReference type="UCSC" id="uc002pmq.4">
    <property type="organism name" value="human"/>
</dbReference>
<dbReference type="AGR" id="HGNC:25534"/>
<dbReference type="CTD" id="55150"/>
<dbReference type="GeneCards" id="C19orf73"/>
<dbReference type="HGNC" id="HGNC:25534">
    <property type="gene designation" value="C19orf73"/>
</dbReference>
<dbReference type="HPA" id="ENSG00000221916">
    <property type="expression patterns" value="Tissue enhanced (brain)"/>
</dbReference>
<dbReference type="neXtProt" id="NX_Q9NVV2"/>
<dbReference type="OpenTargets" id="ENSG00000221916"/>
<dbReference type="PharmGKB" id="PA164717000"/>
<dbReference type="VEuPathDB" id="HostDB:ENSG00000221916"/>
<dbReference type="eggNOG" id="ENOG502TGVD">
    <property type="taxonomic scope" value="Eukaryota"/>
</dbReference>
<dbReference type="GeneTree" id="ENSGT00390000010781"/>
<dbReference type="HOGENOM" id="CLU_1964645_0_0_1"/>
<dbReference type="InParanoid" id="Q9NVV2"/>
<dbReference type="OMA" id="FRKDALW"/>
<dbReference type="OrthoDB" id="9537769at2759"/>
<dbReference type="PAN-GO" id="Q9NVV2">
    <property type="GO annotations" value="0 GO annotations based on evolutionary models"/>
</dbReference>
<dbReference type="PhylomeDB" id="Q9NVV2"/>
<dbReference type="TreeFam" id="TF340718"/>
<dbReference type="PathwayCommons" id="Q9NVV2"/>
<dbReference type="SignaLink" id="Q9NVV2"/>
<dbReference type="BioGRID-ORCS" id="55150">
    <property type="hits" value="8 hits in 1132 CRISPR screens"/>
</dbReference>
<dbReference type="GenomeRNAi" id="55150"/>
<dbReference type="Pharos" id="Q9NVV2">
    <property type="development level" value="Tdark"/>
</dbReference>
<dbReference type="PRO" id="PR:Q9NVV2"/>
<dbReference type="Proteomes" id="UP000005640">
    <property type="component" value="Chromosome 19"/>
</dbReference>
<dbReference type="RNAct" id="Q9NVV2">
    <property type="molecule type" value="protein"/>
</dbReference>
<dbReference type="Bgee" id="ENSG00000221916">
    <property type="expression patterns" value="Expressed in primordial germ cell in gonad and 90 other cell types or tissues"/>
</dbReference>
<dbReference type="InterPro" id="IPR040779">
    <property type="entry name" value="DUF5538"/>
</dbReference>
<dbReference type="Pfam" id="PF17692">
    <property type="entry name" value="DUF5538"/>
    <property type="match status" value="1"/>
</dbReference>
<protein>
    <recommendedName>
        <fullName>Putative uncharacterized protein C19orf73</fullName>
    </recommendedName>
</protein>
<gene>
    <name type="primary">C19orf73</name>
</gene>
<name>CS073_HUMAN</name>
<accession>Q9NVV2</accession>
<accession>Q6NSX4</accession>
<comment type="interaction">
    <interactant intactId="EBI-2859285">
        <id>Q9NVV2</id>
    </interactant>
    <interactant intactId="EBI-948001">
        <id>Q15323</id>
        <label>KRT31</label>
    </interactant>
    <organismsDiffer>false</organismsDiffer>
    <experiments>3</experiments>
</comment>
<comment type="interaction">
    <interactant intactId="EBI-2859285">
        <id>Q9NVV2</id>
    </interactant>
    <interactant intactId="EBI-10171697">
        <id>Q6A162</id>
        <label>KRT40</label>
    </interactant>
    <organismsDiffer>false</organismsDiffer>
    <experiments>3</experiments>
</comment>
<comment type="interaction">
    <interactant intactId="EBI-2859285">
        <id>Q9NVV2</id>
    </interactant>
    <interactant intactId="EBI-717422">
        <id>Q12800</id>
        <label>TFCP2</label>
    </interactant>
    <organismsDiffer>false</organismsDiffer>
    <experiments>3</experiments>
</comment>
<organism>
    <name type="scientific">Homo sapiens</name>
    <name type="common">Human</name>
    <dbReference type="NCBI Taxonomy" id="9606"/>
    <lineage>
        <taxon>Eukaryota</taxon>
        <taxon>Metazoa</taxon>
        <taxon>Chordata</taxon>
        <taxon>Craniata</taxon>
        <taxon>Vertebrata</taxon>
        <taxon>Euteleostomi</taxon>
        <taxon>Mammalia</taxon>
        <taxon>Eutheria</taxon>
        <taxon>Euarchontoglires</taxon>
        <taxon>Primates</taxon>
        <taxon>Haplorrhini</taxon>
        <taxon>Catarrhini</taxon>
        <taxon>Hominidae</taxon>
        <taxon>Homo</taxon>
    </lineage>
</organism>
<evidence type="ECO:0000256" key="1">
    <source>
        <dbReference type="SAM" id="MobiDB-lite"/>
    </source>
</evidence>
<evidence type="ECO:0000269" key="2">
    <source>
    </source>
</evidence>
<evidence type="ECO:0000269" key="3">
    <source>
    </source>
</evidence>
<evidence type="ECO:0000269" key="4">
    <source ref="3"/>
</evidence>
<reference key="1">
    <citation type="journal article" date="2004" name="Nat. Genet.">
        <title>Complete sequencing and characterization of 21,243 full-length human cDNAs.</title>
        <authorList>
            <person name="Ota T."/>
            <person name="Suzuki Y."/>
            <person name="Nishikawa T."/>
            <person name="Otsuki T."/>
            <person name="Sugiyama T."/>
            <person name="Irie R."/>
            <person name="Wakamatsu A."/>
            <person name="Hayashi K."/>
            <person name="Sato H."/>
            <person name="Nagai K."/>
            <person name="Kimura K."/>
            <person name="Makita H."/>
            <person name="Sekine M."/>
            <person name="Obayashi M."/>
            <person name="Nishi T."/>
            <person name="Shibahara T."/>
            <person name="Tanaka T."/>
            <person name="Ishii S."/>
            <person name="Yamamoto J."/>
            <person name="Saito K."/>
            <person name="Kawai Y."/>
            <person name="Isono Y."/>
            <person name="Nakamura Y."/>
            <person name="Nagahari K."/>
            <person name="Murakami K."/>
            <person name="Yasuda T."/>
            <person name="Iwayanagi T."/>
            <person name="Wagatsuma M."/>
            <person name="Shiratori A."/>
            <person name="Sudo H."/>
            <person name="Hosoiri T."/>
            <person name="Kaku Y."/>
            <person name="Kodaira H."/>
            <person name="Kondo H."/>
            <person name="Sugawara M."/>
            <person name="Takahashi M."/>
            <person name="Kanda K."/>
            <person name="Yokoi T."/>
            <person name="Furuya T."/>
            <person name="Kikkawa E."/>
            <person name="Omura Y."/>
            <person name="Abe K."/>
            <person name="Kamihara K."/>
            <person name="Katsuta N."/>
            <person name="Sato K."/>
            <person name="Tanikawa M."/>
            <person name="Yamazaki M."/>
            <person name="Ninomiya K."/>
            <person name="Ishibashi T."/>
            <person name="Yamashita H."/>
            <person name="Murakawa K."/>
            <person name="Fujimori K."/>
            <person name="Tanai H."/>
            <person name="Kimata M."/>
            <person name="Watanabe M."/>
            <person name="Hiraoka S."/>
            <person name="Chiba Y."/>
            <person name="Ishida S."/>
            <person name="Ono Y."/>
            <person name="Takiguchi S."/>
            <person name="Watanabe S."/>
            <person name="Yosida M."/>
            <person name="Hotuta T."/>
            <person name="Kusano J."/>
            <person name="Kanehori K."/>
            <person name="Takahashi-Fujii A."/>
            <person name="Hara H."/>
            <person name="Tanase T.-O."/>
            <person name="Nomura Y."/>
            <person name="Togiya S."/>
            <person name="Komai F."/>
            <person name="Hara R."/>
            <person name="Takeuchi K."/>
            <person name="Arita M."/>
            <person name="Imose N."/>
            <person name="Musashino K."/>
            <person name="Yuuki H."/>
            <person name="Oshima A."/>
            <person name="Sasaki N."/>
            <person name="Aotsuka S."/>
            <person name="Yoshikawa Y."/>
            <person name="Matsunawa H."/>
            <person name="Ichihara T."/>
            <person name="Shiohata N."/>
            <person name="Sano S."/>
            <person name="Moriya S."/>
            <person name="Momiyama H."/>
            <person name="Satoh N."/>
            <person name="Takami S."/>
            <person name="Terashima Y."/>
            <person name="Suzuki O."/>
            <person name="Nakagawa S."/>
            <person name="Senoh A."/>
            <person name="Mizoguchi H."/>
            <person name="Goto Y."/>
            <person name="Shimizu F."/>
            <person name="Wakebe H."/>
            <person name="Hishigaki H."/>
            <person name="Watanabe T."/>
            <person name="Sugiyama A."/>
            <person name="Takemoto M."/>
            <person name="Kawakami B."/>
            <person name="Yamazaki M."/>
            <person name="Watanabe K."/>
            <person name="Kumagai A."/>
            <person name="Itakura S."/>
            <person name="Fukuzumi Y."/>
            <person name="Fujimori Y."/>
            <person name="Komiyama M."/>
            <person name="Tashiro H."/>
            <person name="Tanigami A."/>
            <person name="Fujiwara T."/>
            <person name="Ono T."/>
            <person name="Yamada K."/>
            <person name="Fujii Y."/>
            <person name="Ozaki K."/>
            <person name="Hirao M."/>
            <person name="Ohmori Y."/>
            <person name="Kawabata A."/>
            <person name="Hikiji T."/>
            <person name="Kobatake N."/>
            <person name="Inagaki H."/>
            <person name="Ikema Y."/>
            <person name="Okamoto S."/>
            <person name="Okitani R."/>
            <person name="Kawakami T."/>
            <person name="Noguchi S."/>
            <person name="Itoh T."/>
            <person name="Shigeta K."/>
            <person name="Senba T."/>
            <person name="Matsumura K."/>
            <person name="Nakajima Y."/>
            <person name="Mizuno T."/>
            <person name="Morinaga M."/>
            <person name="Sasaki M."/>
            <person name="Togashi T."/>
            <person name="Oyama M."/>
            <person name="Hata H."/>
            <person name="Watanabe M."/>
            <person name="Komatsu T."/>
            <person name="Mizushima-Sugano J."/>
            <person name="Satoh T."/>
            <person name="Shirai Y."/>
            <person name="Takahashi Y."/>
            <person name="Nakagawa K."/>
            <person name="Okumura K."/>
            <person name="Nagase T."/>
            <person name="Nomura N."/>
            <person name="Kikuchi H."/>
            <person name="Masuho Y."/>
            <person name="Yamashita R."/>
            <person name="Nakai K."/>
            <person name="Yada T."/>
            <person name="Nakamura Y."/>
            <person name="Ohara O."/>
            <person name="Isogai T."/>
            <person name="Sugano S."/>
        </authorList>
    </citation>
    <scope>NUCLEOTIDE SEQUENCE [LARGE SCALE MRNA]</scope>
    <scope>VARIANT GLY-106</scope>
</reference>
<reference key="2">
    <citation type="journal article" date="2004" name="Nature">
        <title>The DNA sequence and biology of human chromosome 19.</title>
        <authorList>
            <person name="Grimwood J."/>
            <person name="Gordon L.A."/>
            <person name="Olsen A.S."/>
            <person name="Terry A."/>
            <person name="Schmutz J."/>
            <person name="Lamerdin J.E."/>
            <person name="Hellsten U."/>
            <person name="Goodstein D."/>
            <person name="Couronne O."/>
            <person name="Tran-Gyamfi M."/>
            <person name="Aerts A."/>
            <person name="Altherr M."/>
            <person name="Ashworth L."/>
            <person name="Bajorek E."/>
            <person name="Black S."/>
            <person name="Branscomb E."/>
            <person name="Caenepeel S."/>
            <person name="Carrano A.V."/>
            <person name="Caoile C."/>
            <person name="Chan Y.M."/>
            <person name="Christensen M."/>
            <person name="Cleland C.A."/>
            <person name="Copeland A."/>
            <person name="Dalin E."/>
            <person name="Dehal P."/>
            <person name="Denys M."/>
            <person name="Detter J.C."/>
            <person name="Escobar J."/>
            <person name="Flowers D."/>
            <person name="Fotopulos D."/>
            <person name="Garcia C."/>
            <person name="Georgescu A.M."/>
            <person name="Glavina T."/>
            <person name="Gomez M."/>
            <person name="Gonzales E."/>
            <person name="Groza M."/>
            <person name="Hammon N."/>
            <person name="Hawkins T."/>
            <person name="Haydu L."/>
            <person name="Ho I."/>
            <person name="Huang W."/>
            <person name="Israni S."/>
            <person name="Jett J."/>
            <person name="Kadner K."/>
            <person name="Kimball H."/>
            <person name="Kobayashi A."/>
            <person name="Larionov V."/>
            <person name="Leem S.-H."/>
            <person name="Lopez F."/>
            <person name="Lou Y."/>
            <person name="Lowry S."/>
            <person name="Malfatti S."/>
            <person name="Martinez D."/>
            <person name="McCready P.M."/>
            <person name="Medina C."/>
            <person name="Morgan J."/>
            <person name="Nelson K."/>
            <person name="Nolan M."/>
            <person name="Ovcharenko I."/>
            <person name="Pitluck S."/>
            <person name="Pollard M."/>
            <person name="Popkie A.P."/>
            <person name="Predki P."/>
            <person name="Quan G."/>
            <person name="Ramirez L."/>
            <person name="Rash S."/>
            <person name="Retterer J."/>
            <person name="Rodriguez A."/>
            <person name="Rogers S."/>
            <person name="Salamov A."/>
            <person name="Salazar A."/>
            <person name="She X."/>
            <person name="Smith D."/>
            <person name="Slezak T."/>
            <person name="Solovyev V."/>
            <person name="Thayer N."/>
            <person name="Tice H."/>
            <person name="Tsai M."/>
            <person name="Ustaszewska A."/>
            <person name="Vo N."/>
            <person name="Wagner M."/>
            <person name="Wheeler J."/>
            <person name="Wu K."/>
            <person name="Xie G."/>
            <person name="Yang J."/>
            <person name="Dubchak I."/>
            <person name="Furey T.S."/>
            <person name="DeJong P."/>
            <person name="Dickson M."/>
            <person name="Gordon D."/>
            <person name="Eichler E.E."/>
            <person name="Pennacchio L.A."/>
            <person name="Richardson P."/>
            <person name="Stubbs L."/>
            <person name="Rokhsar D.S."/>
            <person name="Myers R.M."/>
            <person name="Rubin E.M."/>
            <person name="Lucas S.M."/>
        </authorList>
    </citation>
    <scope>NUCLEOTIDE SEQUENCE [LARGE SCALE GENOMIC DNA]</scope>
</reference>
<reference key="3">
    <citation type="submission" date="2005-07" db="EMBL/GenBank/DDBJ databases">
        <authorList>
            <person name="Mural R.J."/>
            <person name="Istrail S."/>
            <person name="Sutton G.G."/>
            <person name="Florea L."/>
            <person name="Halpern A.L."/>
            <person name="Mobarry C.M."/>
            <person name="Lippert R."/>
            <person name="Walenz B."/>
            <person name="Shatkay H."/>
            <person name="Dew I."/>
            <person name="Miller J.R."/>
            <person name="Flanigan M.J."/>
            <person name="Edwards N.J."/>
            <person name="Bolanos R."/>
            <person name="Fasulo D."/>
            <person name="Halldorsson B.V."/>
            <person name="Hannenhalli S."/>
            <person name="Turner R."/>
            <person name="Yooseph S."/>
            <person name="Lu F."/>
            <person name="Nusskern D.R."/>
            <person name="Shue B.C."/>
            <person name="Zheng X.H."/>
            <person name="Zhong F."/>
            <person name="Delcher A.L."/>
            <person name="Huson D.H."/>
            <person name="Kravitz S.A."/>
            <person name="Mouchard L."/>
            <person name="Reinert K."/>
            <person name="Remington K.A."/>
            <person name="Clark A.G."/>
            <person name="Waterman M.S."/>
            <person name="Eichler E.E."/>
            <person name="Adams M.D."/>
            <person name="Hunkapiller M.W."/>
            <person name="Myers E.W."/>
            <person name="Venter J.C."/>
        </authorList>
    </citation>
    <scope>NUCLEOTIDE SEQUENCE [LARGE SCALE GENOMIC DNA]</scope>
    <scope>VARIANT GLY-106</scope>
</reference>
<reference key="4">
    <citation type="journal article" date="2004" name="Genome Res.">
        <title>The status, quality, and expansion of the NIH full-length cDNA project: the Mammalian Gene Collection (MGC).</title>
        <authorList>
            <consortium name="The MGC Project Team"/>
        </authorList>
    </citation>
    <scope>NUCLEOTIDE SEQUENCE [LARGE SCALE MRNA]</scope>
    <scope>VARIANT GLY-106</scope>
    <source>
        <tissue>Prostate</tissue>
    </source>
</reference>
<keyword id="KW-1185">Reference proteome</keyword>
<proteinExistence type="evidence at protein level"/>
<feature type="chain" id="PRO_0000348438" description="Putative uncharacterized protein C19orf73">
    <location>
        <begin position="1"/>
        <end position="129"/>
    </location>
</feature>
<feature type="region of interest" description="Disordered" evidence="1">
    <location>
        <begin position="34"/>
        <end position="57"/>
    </location>
</feature>
<feature type="sequence variant" id="VAR_046164" description="In dbSNP:rs2232003." evidence="2 3 4">
    <original>S</original>
    <variation>G</variation>
    <location>
        <position position="106"/>
    </location>
</feature>
<sequence>MRLKVGFQGGGCFRKDALCLEGGVSARWARAPHSAPLRPPRELHAAPPPATPTQTVVRPAGFPRRTRLMVRSAPPTQRPPTGSGCVSGLWRKGLGLRPQTLLRVGSVVLSSAPALRPRLGPCLRPPPSD</sequence>